<organism>
    <name type="scientific">Homo sapiens</name>
    <name type="common">Human</name>
    <dbReference type="NCBI Taxonomy" id="9606"/>
    <lineage>
        <taxon>Eukaryota</taxon>
        <taxon>Metazoa</taxon>
        <taxon>Chordata</taxon>
        <taxon>Craniata</taxon>
        <taxon>Vertebrata</taxon>
        <taxon>Euteleostomi</taxon>
        <taxon>Mammalia</taxon>
        <taxon>Eutheria</taxon>
        <taxon>Euarchontoglires</taxon>
        <taxon>Primates</taxon>
        <taxon>Haplorrhini</taxon>
        <taxon>Catarrhini</taxon>
        <taxon>Hominidae</taxon>
        <taxon>Homo</taxon>
    </lineage>
</organism>
<sequence>MTILFLTMVISYFGCMKAAPMKEANIRGQGGLAYPGVRTHGTLESVNGPKAGSRGLTSLADTFEHVIEELLDEDQKVRPNEENNKDADLYTSRVMLSSQVPLEPPLLFLLEEYKNYLDAANMSMRVRRHSDPARRGELSVCDSISEWVTAADKKTAVDMSGGTVTVLEKVPVSKGQLKQYFYETKCNPMGYTKEGCRGIDKRHWNSQCRTTQSYVRALTMDSKKRIGWRFIRIDTSCVCTLTIKRGR</sequence>
<proteinExistence type="evidence at protein level"/>
<feature type="signal peptide" evidence="2">
    <location>
        <begin position="1"/>
        <end position="18"/>
    </location>
</feature>
<feature type="chain" id="PRO_0000447533" description="Neurotrophic factor BDNF precursor form">
    <location>
        <begin position="19"/>
        <end position="247"/>
    </location>
</feature>
<feature type="propeptide" id="PRO_0000019633" evidence="28">
    <location>
        <begin position="19"/>
        <end position="128"/>
    </location>
</feature>
<feature type="chain" id="PRO_0000019634" description="Neurotrophic factor BDNF">
    <location>
        <begin position="129"/>
        <end position="247"/>
    </location>
</feature>
<feature type="site" description="Cleavage; by MBTPS1" evidence="5">
    <location>
        <begin position="57"/>
        <end position="58"/>
    </location>
</feature>
<feature type="glycosylation site" description="N-linked (GlcNAc...) asparagine" evidence="26 27">
    <location>
        <position position="121"/>
    </location>
</feature>
<feature type="disulfide bond" evidence="4 18 30 31">
    <location>
        <begin position="141"/>
        <end position="208"/>
    </location>
</feature>
<feature type="disulfide bond" evidence="4 18 30 31">
    <location>
        <begin position="186"/>
        <end position="237"/>
    </location>
</feature>
<feature type="disulfide bond" evidence="4 18 30 31">
    <location>
        <begin position="196"/>
        <end position="239"/>
    </location>
</feature>
<feature type="splice variant" id="VSP_037948" description="In isoform 2." evidence="21 22 23">
    <original>M</original>
    <variation>MFHQVRRVM</variation>
    <location>
        <position position="1"/>
    </location>
</feature>
<feature type="splice variant" id="VSP_038099" description="In isoform 3." evidence="22 23">
    <original>M</original>
    <variation>MQSREEEWFHQVRRVM</variation>
    <location>
        <position position="1"/>
    </location>
</feature>
<feature type="splice variant" id="VSP_038100" description="In isoform 4." evidence="23">
    <original>M</original>
    <variation>MCGATSFLHECTRLILVTTQNAEFLQKGLQVHTCFGVYPHASVWHDCASQKKGCAVYLHVSVEFNKLIPENGFIKFHQVRRVM</variation>
    <location>
        <position position="1"/>
    </location>
</feature>
<feature type="splice variant" id="VSP_038101" description="In isoform 5." evidence="23">
    <original>M</original>
    <variation>MLCAISLCARVRKLRSAGRCGKFHQVRRVM</variation>
    <location>
        <position position="1"/>
    </location>
</feature>
<feature type="sequence variant" id="VAR_018260" description="Found in a patient with congenital central hypoventilation syndrome; uncertain significance; dbSNP:rs8192466." evidence="6">
    <original>T</original>
    <variation>I</variation>
    <location>
        <position position="2"/>
    </location>
</feature>
<feature type="sequence variant" id="VAR_004626" description="Risk factor for eating disorders such as anorexia nervosa and bulimia nervosa; risk factor for poorer episodic memory; may have a protective effect in obsessive-compulsive disorder; impairs localization to secretory granules or synapses; decreases density of dendritic mushroom spines and synapses; dbSNP:rs6265." evidence="3 7 8 9 10 11 17 20">
    <original>V</original>
    <variation>M</variation>
    <location>
        <position position="66"/>
    </location>
</feature>
<feature type="sequence variant" id="VAR_011797" description="In dbSNP:rs1048218.">
    <original>Q</original>
    <variation>H</variation>
    <location>
        <position position="75"/>
    </location>
</feature>
<feature type="sequence variant" id="VAR_080766" description="Found in a small consanguineous family with intellectual disability; uncertain significance; dbSNP:rs765594245." evidence="16">
    <original>M</original>
    <variation>T</variation>
    <location>
        <position position="122"/>
    </location>
</feature>
<feature type="sequence variant" id="VAR_011798" description="In dbSNP:rs1048220.">
    <original>R</original>
    <variation>M</variation>
    <location>
        <position position="125"/>
    </location>
</feature>
<feature type="sequence variant" id="VAR_011799" description="In dbSNP:rs1048221.">
    <original>R</original>
    <variation>L</variation>
    <location>
        <position position="127"/>
    </location>
</feature>
<feature type="mutagenesis site" description="Abolishes processing by MBTPS1." evidence="5">
    <original>R</original>
    <variation>A</variation>
    <location>
        <position position="54"/>
    </location>
</feature>
<feature type="strand" evidence="32">
    <location>
        <begin position="138"/>
        <end position="141"/>
    </location>
</feature>
<feature type="strand" evidence="32">
    <location>
        <begin position="143"/>
        <end position="149"/>
    </location>
</feature>
<feature type="helix" evidence="32">
    <location>
        <begin position="150"/>
        <end position="153"/>
    </location>
</feature>
<feature type="strand" evidence="32">
    <location>
        <begin position="155"/>
        <end position="158"/>
    </location>
</feature>
<feature type="strand" evidence="32">
    <location>
        <begin position="163"/>
        <end position="166"/>
    </location>
</feature>
<feature type="strand" evidence="32">
    <location>
        <begin position="168"/>
        <end position="171"/>
    </location>
</feature>
<feature type="strand" evidence="32">
    <location>
        <begin position="173"/>
        <end position="178"/>
    </location>
</feature>
<feature type="strand" evidence="32">
    <location>
        <begin position="180"/>
        <end position="186"/>
    </location>
</feature>
<feature type="helix" evidence="32">
    <location>
        <begin position="191"/>
        <end position="193"/>
    </location>
</feature>
<feature type="turn" evidence="32">
    <location>
        <begin position="201"/>
        <end position="203"/>
    </location>
</feature>
<feature type="strand" evidence="32">
    <location>
        <begin position="204"/>
        <end position="220"/>
    </location>
</feature>
<feature type="strand" evidence="32">
    <location>
        <begin position="226"/>
        <end position="243"/>
    </location>
</feature>
<dbReference type="EMBL" id="M37762">
    <property type="protein sequence ID" value="AAA51820.1"/>
    <property type="molecule type" value="Genomic_DNA"/>
</dbReference>
<dbReference type="EMBL" id="M61176">
    <property type="protein sequence ID" value="AAA69805.2"/>
    <property type="molecule type" value="mRNA"/>
</dbReference>
<dbReference type="EMBL" id="M61181">
    <property type="protein sequence ID" value="AAA96140.1"/>
    <property type="molecule type" value="Genomic_DNA"/>
</dbReference>
<dbReference type="EMBL" id="X60201">
    <property type="protein sequence ID" value="CAA42761.1"/>
    <property type="molecule type" value="mRNA"/>
</dbReference>
<dbReference type="EMBL" id="AY054392">
    <property type="protein sequence ID" value="AAL23557.2"/>
    <property type="molecule type" value="mRNA"/>
</dbReference>
<dbReference type="EMBL" id="AY054393">
    <property type="protein sequence ID" value="AAL23558.1"/>
    <property type="molecule type" value="mRNA"/>
</dbReference>
<dbReference type="EMBL" id="AY054394">
    <property type="protein sequence ID" value="AAL23559.1"/>
    <property type="molecule type" value="mRNA"/>
</dbReference>
<dbReference type="EMBL" id="AY054395">
    <property type="protein sequence ID" value="AAL23560.1"/>
    <property type="molecule type" value="mRNA"/>
</dbReference>
<dbReference type="EMBL" id="AY054396">
    <property type="protein sequence ID" value="AAL23561.1"/>
    <property type="molecule type" value="mRNA"/>
</dbReference>
<dbReference type="EMBL" id="AY054397">
    <property type="protein sequence ID" value="AAL23562.1"/>
    <property type="molecule type" value="mRNA"/>
</dbReference>
<dbReference type="EMBL" id="AY054398">
    <property type="protein sequence ID" value="AAL23563.1"/>
    <property type="molecule type" value="mRNA"/>
</dbReference>
<dbReference type="EMBL" id="AY054399">
    <property type="protein sequence ID" value="AAL23564.1"/>
    <property type="molecule type" value="mRNA"/>
</dbReference>
<dbReference type="EMBL" id="AY054400">
    <property type="protein sequence ID" value="AAL23565.2"/>
    <property type="molecule type" value="mRNA"/>
</dbReference>
<dbReference type="EMBL" id="AF411339">
    <property type="protein sequence ID" value="AAO15434.1"/>
    <property type="molecule type" value="Genomic_DNA"/>
</dbReference>
<dbReference type="EMBL" id="EF674517">
    <property type="protein sequence ID" value="ABS29021.1"/>
    <property type="molecule type" value="mRNA"/>
</dbReference>
<dbReference type="EMBL" id="EF674518">
    <property type="protein sequence ID" value="ABS29022.1"/>
    <property type="molecule type" value="mRNA"/>
</dbReference>
<dbReference type="EMBL" id="EF674519">
    <property type="protein sequence ID" value="ABS29023.1"/>
    <property type="molecule type" value="mRNA"/>
</dbReference>
<dbReference type="EMBL" id="EF674520">
    <property type="protein sequence ID" value="ABS29024.1"/>
    <property type="molecule type" value="mRNA"/>
</dbReference>
<dbReference type="EMBL" id="EF674521">
    <property type="protein sequence ID" value="ABS29025.1"/>
    <property type="molecule type" value="mRNA"/>
</dbReference>
<dbReference type="EMBL" id="EF689009">
    <property type="protein sequence ID" value="ABS32249.1"/>
    <property type="molecule type" value="mRNA"/>
</dbReference>
<dbReference type="EMBL" id="EF689010">
    <property type="protein sequence ID" value="ABS32250.1"/>
    <property type="molecule type" value="mRNA"/>
</dbReference>
<dbReference type="EMBL" id="EF689011">
    <property type="protein sequence ID" value="ABS32251.1"/>
    <property type="molecule type" value="mRNA"/>
</dbReference>
<dbReference type="EMBL" id="EF689012">
    <property type="protein sequence ID" value="ABS32252.1"/>
    <property type="molecule type" value="mRNA"/>
</dbReference>
<dbReference type="EMBL" id="EF689013">
    <property type="protein sequence ID" value="ABS32253.1"/>
    <property type="molecule type" value="mRNA"/>
</dbReference>
<dbReference type="EMBL" id="EF689014">
    <property type="protein sequence ID" value="ABS32254.1"/>
    <property type="molecule type" value="mRNA"/>
</dbReference>
<dbReference type="EMBL" id="EF689015">
    <property type="protein sequence ID" value="ABS32255.1"/>
    <property type="molecule type" value="mRNA"/>
</dbReference>
<dbReference type="EMBL" id="EF689016">
    <property type="protein sequence ID" value="ABS32256.1"/>
    <property type="molecule type" value="mRNA"/>
</dbReference>
<dbReference type="EMBL" id="EF689017">
    <property type="protein sequence ID" value="ABS32257.1"/>
    <property type="molecule type" value="mRNA"/>
</dbReference>
<dbReference type="EMBL" id="EF689018">
    <property type="protein sequence ID" value="ABS32258.1"/>
    <property type="molecule type" value="mRNA"/>
</dbReference>
<dbReference type="EMBL" id="EF689019">
    <property type="protein sequence ID" value="ABS32259.1"/>
    <property type="molecule type" value="mRNA"/>
</dbReference>
<dbReference type="EMBL" id="EF689020">
    <property type="protein sequence ID" value="ABS32260.1"/>
    <property type="molecule type" value="mRNA"/>
</dbReference>
<dbReference type="EMBL" id="EF689021">
    <property type="protein sequence ID" value="ABS32261.1"/>
    <property type="molecule type" value="mRNA"/>
</dbReference>
<dbReference type="EMBL" id="X91251">
    <property type="protein sequence ID" value="CAA62632.1"/>
    <property type="molecule type" value="mRNA"/>
</dbReference>
<dbReference type="EMBL" id="AF400438">
    <property type="protein sequence ID" value="AAK92487.1"/>
    <property type="molecule type" value="mRNA"/>
</dbReference>
<dbReference type="EMBL" id="AY656701">
    <property type="protein sequence ID" value="AAT74399.1"/>
    <property type="molecule type" value="mRNA"/>
</dbReference>
<dbReference type="EMBL" id="AK289853">
    <property type="protein sequence ID" value="BAF82542.1"/>
    <property type="molecule type" value="mRNA"/>
</dbReference>
<dbReference type="EMBL" id="AK289763">
    <property type="protein sequence ID" value="BAF82452.1"/>
    <property type="molecule type" value="mRNA"/>
</dbReference>
<dbReference type="EMBL" id="AC104563">
    <property type="status" value="NOT_ANNOTATED_CDS"/>
    <property type="molecule type" value="Genomic_DNA"/>
</dbReference>
<dbReference type="EMBL" id="CH471064">
    <property type="protein sequence ID" value="EAW68274.1"/>
    <property type="molecule type" value="Genomic_DNA"/>
</dbReference>
<dbReference type="EMBL" id="CH471064">
    <property type="protein sequence ID" value="EAW68278.1"/>
    <property type="molecule type" value="Genomic_DNA"/>
</dbReference>
<dbReference type="EMBL" id="CH471064">
    <property type="protein sequence ID" value="EAW68279.1"/>
    <property type="molecule type" value="Genomic_DNA"/>
</dbReference>
<dbReference type="EMBL" id="CH471064">
    <property type="protein sequence ID" value="EAW68275.1"/>
    <property type="molecule type" value="Genomic_DNA"/>
</dbReference>
<dbReference type="EMBL" id="CH471064">
    <property type="protein sequence ID" value="EAW68276.1"/>
    <property type="molecule type" value="Genomic_DNA"/>
</dbReference>
<dbReference type="EMBL" id="CH471064">
    <property type="protein sequence ID" value="EAW68277.1"/>
    <property type="molecule type" value="Genomic_DNA"/>
</dbReference>
<dbReference type="EMBL" id="BC029795">
    <property type="protein sequence ID" value="AAH29795.1"/>
    <property type="molecule type" value="mRNA"/>
</dbReference>
<dbReference type="EMBL" id="AY011481">
    <property type="protein sequence ID" value="AAG47514.1"/>
    <property type="molecule type" value="Genomic_DNA"/>
</dbReference>
<dbReference type="CCDS" id="CCDS41628.1">
    <molecule id="P23560-3"/>
</dbReference>
<dbReference type="CCDS" id="CCDS44558.1">
    <molecule id="P23560-4"/>
</dbReference>
<dbReference type="CCDS" id="CCDS7865.1">
    <molecule id="P23560-2"/>
</dbReference>
<dbReference type="CCDS" id="CCDS7866.1">
    <molecule id="P23560-1"/>
</dbReference>
<dbReference type="PIR" id="B36208">
    <property type="entry name" value="A40304"/>
</dbReference>
<dbReference type="RefSeq" id="NP_001137277.1">
    <molecule id="P23560-1"/>
    <property type="nucleotide sequence ID" value="NM_001143805.1"/>
</dbReference>
<dbReference type="RefSeq" id="NP_001137278.1">
    <molecule id="P23560-1"/>
    <property type="nucleotide sequence ID" value="NM_001143806.1"/>
</dbReference>
<dbReference type="RefSeq" id="NP_001137279.1">
    <molecule id="P23560-1"/>
    <property type="nucleotide sequence ID" value="NM_001143807.2"/>
</dbReference>
<dbReference type="RefSeq" id="NP_001137280.1">
    <molecule id="P23560-1"/>
    <property type="nucleotide sequence ID" value="NM_001143808.2"/>
</dbReference>
<dbReference type="RefSeq" id="NP_001137281.1">
    <molecule id="P23560-5"/>
    <property type="nucleotide sequence ID" value="NM_001143809.2"/>
</dbReference>
<dbReference type="RefSeq" id="NP_001137282.1">
    <molecule id="P23560-4"/>
    <property type="nucleotide sequence ID" value="NM_001143810.2"/>
</dbReference>
<dbReference type="RefSeq" id="NP_001137283.1">
    <molecule id="P23560-1"/>
    <property type="nucleotide sequence ID" value="NM_001143811.2"/>
</dbReference>
<dbReference type="RefSeq" id="NP_001137284.1">
    <molecule id="P23560-1"/>
    <property type="nucleotide sequence ID" value="NM_001143812.2"/>
</dbReference>
<dbReference type="RefSeq" id="NP_001137285.1">
    <molecule id="P23560-1"/>
    <property type="nucleotide sequence ID" value="NM_001143813.2"/>
</dbReference>
<dbReference type="RefSeq" id="NP_001137286.1">
    <molecule id="P23560-1"/>
    <property type="nucleotide sequence ID" value="NM_001143814.2"/>
</dbReference>
<dbReference type="RefSeq" id="NP_001137288.1">
    <molecule id="P23560-1"/>
    <property type="nucleotide sequence ID" value="NM_001143816.2"/>
</dbReference>
<dbReference type="RefSeq" id="NP_001700.2">
    <molecule id="P23560-1"/>
    <property type="nucleotide sequence ID" value="NM_001709.4"/>
</dbReference>
<dbReference type="RefSeq" id="NP_733927.1">
    <molecule id="P23560-2"/>
    <property type="nucleotide sequence ID" value="NM_170731.5"/>
</dbReference>
<dbReference type="RefSeq" id="NP_733928.1">
    <molecule id="P23560-1"/>
    <property type="nucleotide sequence ID" value="NM_170732.4"/>
</dbReference>
<dbReference type="RefSeq" id="NP_733929.1">
    <molecule id="P23560-1"/>
    <property type="nucleotide sequence ID" value="NM_170733.4"/>
</dbReference>
<dbReference type="RefSeq" id="NP_733930.1">
    <molecule id="P23560-3"/>
    <property type="nucleotide sequence ID" value="NM_170734.4"/>
</dbReference>
<dbReference type="RefSeq" id="NP_733931.1">
    <molecule id="P23560-1"/>
    <property type="nucleotide sequence ID" value="NM_170735.6"/>
</dbReference>
<dbReference type="RefSeq" id="XP_011518582.1">
    <property type="nucleotide sequence ID" value="XM_011520280.2"/>
</dbReference>
<dbReference type="PDB" id="1B8M">
    <property type="method" value="X-ray"/>
    <property type="resolution" value="2.75 A"/>
    <property type="chains" value="A=129-247"/>
</dbReference>
<dbReference type="PDB" id="1BND">
    <property type="method" value="X-ray"/>
    <property type="resolution" value="2.30 A"/>
    <property type="chains" value="A=129-247"/>
</dbReference>
<dbReference type="PDBsum" id="1B8M"/>
<dbReference type="PDBsum" id="1BND"/>
<dbReference type="BMRB" id="P23560"/>
<dbReference type="SMR" id="P23560"/>
<dbReference type="BioGRID" id="107096">
    <property type="interactions" value="49"/>
</dbReference>
<dbReference type="DIP" id="DIP-5719N"/>
<dbReference type="FunCoup" id="P23560">
    <property type="interactions" value="1114"/>
</dbReference>
<dbReference type="IntAct" id="P23560">
    <property type="interactions" value="80"/>
</dbReference>
<dbReference type="MINT" id="P23560"/>
<dbReference type="STRING" id="9606.ENSP00000414303"/>
<dbReference type="BindingDB" id="P23560"/>
<dbReference type="ChEMBL" id="CHEMBL4523205"/>
<dbReference type="DrugBank" id="DB09301">
    <property type="generic name" value="Chondroitin sulfate"/>
</dbReference>
<dbReference type="DrugBank" id="DB09130">
    <property type="generic name" value="Copper"/>
</dbReference>
<dbReference type="DrugBank" id="DB05047">
    <property type="generic name" value="CX-717"/>
</dbReference>
<dbReference type="DrugBank" id="DB11823">
    <property type="generic name" value="Esketamine"/>
</dbReference>
<dbReference type="GlyCosmos" id="P23560">
    <property type="glycosylation" value="1 site, No reported glycans"/>
</dbReference>
<dbReference type="GlyGen" id="P23560">
    <property type="glycosylation" value="1 site, 1 N-linked glycan (1 site)"/>
</dbReference>
<dbReference type="iPTMnet" id="P23560"/>
<dbReference type="PhosphoSitePlus" id="P23560"/>
<dbReference type="BioMuta" id="BDNF"/>
<dbReference type="DMDM" id="114900"/>
<dbReference type="MassIVE" id="P23560"/>
<dbReference type="PaxDb" id="9606-ENSP00000414303"/>
<dbReference type="PeptideAtlas" id="P23560"/>
<dbReference type="ProteomicsDB" id="54129">
    <molecule id="P23560-1"/>
</dbReference>
<dbReference type="ProteomicsDB" id="54130">
    <molecule id="P23560-2"/>
</dbReference>
<dbReference type="ProteomicsDB" id="54131">
    <molecule id="P23560-3"/>
</dbReference>
<dbReference type="ProteomicsDB" id="54132">
    <molecule id="P23560-4"/>
</dbReference>
<dbReference type="ProteomicsDB" id="54133">
    <molecule id="P23560-5"/>
</dbReference>
<dbReference type="TopDownProteomics" id="P23560-2">
    <molecule id="P23560-2"/>
</dbReference>
<dbReference type="ABCD" id="P23560">
    <property type="antibodies" value="4 sequenced antibodies"/>
</dbReference>
<dbReference type="Antibodypedia" id="4032">
    <property type="antibodies" value="1218 antibodies from 49 providers"/>
</dbReference>
<dbReference type="DNASU" id="627"/>
<dbReference type="Ensembl" id="ENST00000314915.6">
    <molecule id="P23560-2"/>
    <property type="protein sequence ID" value="ENSP00000320002.6"/>
    <property type="gene ID" value="ENSG00000176697.20"/>
</dbReference>
<dbReference type="Ensembl" id="ENST00000356660.9">
    <molecule id="P23560-1"/>
    <property type="protein sequence ID" value="ENSP00000349084.4"/>
    <property type="gene ID" value="ENSG00000176697.20"/>
</dbReference>
<dbReference type="Ensembl" id="ENST00000395978.7">
    <molecule id="P23560-1"/>
    <property type="protein sequence ID" value="ENSP00000379302.3"/>
    <property type="gene ID" value="ENSG00000176697.20"/>
</dbReference>
<dbReference type="Ensembl" id="ENST00000395981.7">
    <molecule id="P23560-1"/>
    <property type="protein sequence ID" value="ENSP00000379305.3"/>
    <property type="gene ID" value="ENSG00000176697.20"/>
</dbReference>
<dbReference type="Ensembl" id="ENST00000395983.7">
    <molecule id="P23560-1"/>
    <property type="protein sequence ID" value="ENSP00000379307.3"/>
    <property type="gene ID" value="ENSG00000176697.20"/>
</dbReference>
<dbReference type="Ensembl" id="ENST00000395986.6">
    <molecule id="P23560-3"/>
    <property type="protein sequence ID" value="ENSP00000379309.2"/>
    <property type="gene ID" value="ENSG00000176697.20"/>
</dbReference>
<dbReference type="Ensembl" id="ENST00000418212.5">
    <molecule id="P23560-1"/>
    <property type="protein sequence ID" value="ENSP00000400502.1"/>
    <property type="gene ID" value="ENSG00000176697.20"/>
</dbReference>
<dbReference type="Ensembl" id="ENST00000438929.5">
    <molecule id="P23560-4"/>
    <property type="protein sequence ID" value="ENSP00000414303.1"/>
    <property type="gene ID" value="ENSG00000176697.20"/>
</dbReference>
<dbReference type="Ensembl" id="ENST00000439476.6">
    <molecule id="P23560-1"/>
    <property type="protein sequence ID" value="ENSP00000389345.2"/>
    <property type="gene ID" value="ENSG00000176697.20"/>
</dbReference>
<dbReference type="Ensembl" id="ENST00000525528.1">
    <molecule id="P23560-1"/>
    <property type="protein sequence ID" value="ENSP00000437138.1"/>
    <property type="gene ID" value="ENSG00000176697.20"/>
</dbReference>
<dbReference type="Ensembl" id="ENST00000525950.5">
    <molecule id="P23560-1"/>
    <property type="protein sequence ID" value="ENSP00000432035.1"/>
    <property type="gene ID" value="ENSG00000176697.20"/>
</dbReference>
<dbReference type="Ensembl" id="ENST00000530861.5">
    <molecule id="P23560-1"/>
    <property type="protein sequence ID" value="ENSP00000435564.1"/>
    <property type="gene ID" value="ENSG00000176697.20"/>
</dbReference>
<dbReference type="Ensembl" id="ENST00000532997.5">
    <molecule id="P23560-1"/>
    <property type="protein sequence ID" value="ENSP00000435805.1"/>
    <property type="gene ID" value="ENSG00000176697.20"/>
</dbReference>
<dbReference type="Ensembl" id="ENST00000533131.5">
    <molecule id="P23560-1"/>
    <property type="protein sequence ID" value="ENSP00000432727.1"/>
    <property type="gene ID" value="ENSG00000176697.20"/>
</dbReference>
<dbReference type="Ensembl" id="ENST00000533246.5">
    <molecule id="P23560-1"/>
    <property type="protein sequence ID" value="ENSP00000432376.1"/>
    <property type="gene ID" value="ENSG00000176697.20"/>
</dbReference>
<dbReference type="GeneID" id="627"/>
<dbReference type="KEGG" id="hsa:627"/>
<dbReference type="MANE-Select" id="ENST00000356660.9">
    <property type="protein sequence ID" value="ENSP00000349084.4"/>
    <property type="RefSeq nucleotide sequence ID" value="NM_001709.5"/>
    <property type="RefSeq protein sequence ID" value="NP_001700.2"/>
</dbReference>
<dbReference type="UCSC" id="uc001mrt.4">
    <molecule id="P23560-1"/>
    <property type="organism name" value="human"/>
</dbReference>
<dbReference type="AGR" id="HGNC:1033"/>
<dbReference type="CTD" id="627"/>
<dbReference type="DisGeNET" id="627"/>
<dbReference type="GeneCards" id="BDNF"/>
<dbReference type="HGNC" id="HGNC:1033">
    <property type="gene designation" value="BDNF"/>
</dbReference>
<dbReference type="HPA" id="ENSG00000176697">
    <property type="expression patterns" value="Tissue enhanced (brain)"/>
</dbReference>
<dbReference type="MalaCards" id="BDNF"/>
<dbReference type="MIM" id="113505">
    <property type="type" value="gene"/>
</dbReference>
<dbReference type="neXtProt" id="NX_P23560"/>
<dbReference type="OpenTargets" id="ENSG00000176697"/>
<dbReference type="Orphanet" id="661">
    <property type="disease" value="Congenital central hypoventilation syndrome"/>
</dbReference>
<dbReference type="Orphanet" id="893">
    <property type="disease" value="WAGR syndrome"/>
</dbReference>
<dbReference type="PharmGKB" id="PA31891"/>
<dbReference type="VEuPathDB" id="HostDB:ENSG00000176697"/>
<dbReference type="eggNOG" id="ENOG502QRU8">
    <property type="taxonomic scope" value="Eukaryota"/>
</dbReference>
<dbReference type="GeneTree" id="ENSGT00390000007725"/>
<dbReference type="HOGENOM" id="CLU_059942_0_0_1"/>
<dbReference type="InParanoid" id="P23560"/>
<dbReference type="OMA" id="YPGMRTH"/>
<dbReference type="OrthoDB" id="8959386at2759"/>
<dbReference type="PAN-GO" id="P23560">
    <property type="GO annotations" value="17 GO annotations based on evolutionary models"/>
</dbReference>
<dbReference type="PhylomeDB" id="P23560"/>
<dbReference type="TreeFam" id="TF106463"/>
<dbReference type="PathwayCommons" id="P23560"/>
<dbReference type="Reactome" id="R-HSA-1257604">
    <property type="pathway name" value="PIP3 activates AKT signaling"/>
</dbReference>
<dbReference type="Reactome" id="R-HSA-2219530">
    <property type="pathway name" value="Constitutive Signaling by Aberrant PI3K in Cancer"/>
</dbReference>
<dbReference type="Reactome" id="R-HSA-6811558">
    <property type="pathway name" value="PI5P, PP2A and IER3 Regulate PI3K/AKT Signaling"/>
</dbReference>
<dbReference type="Reactome" id="R-HSA-9022702">
    <property type="pathway name" value="MECP2 regulates transcription of neuronal ligands"/>
</dbReference>
<dbReference type="Reactome" id="R-HSA-9024909">
    <property type="pathway name" value="BDNF activates NTRK2 (TRKB) signaling"/>
</dbReference>
<dbReference type="Reactome" id="R-HSA-9026519">
    <property type="pathway name" value="Activated NTRK2 signals through RAS"/>
</dbReference>
<dbReference type="Reactome" id="R-HSA-9026527">
    <property type="pathway name" value="Activated NTRK2 signals through PLCG1"/>
</dbReference>
<dbReference type="Reactome" id="R-HSA-9028335">
    <property type="pathway name" value="Activated NTRK2 signals through PI3K"/>
</dbReference>
<dbReference type="Reactome" id="R-HSA-9028731">
    <property type="pathway name" value="Activated NTRK2 signals through FRS2 and FRS3"/>
</dbReference>
<dbReference type="Reactome" id="R-HSA-9032500">
    <property type="pathway name" value="Activated NTRK2 signals through FYN"/>
</dbReference>
<dbReference type="Reactome" id="R-HSA-9032759">
    <property type="pathway name" value="NTRK2 activates RAC1"/>
</dbReference>
<dbReference type="Reactome" id="R-HSA-9032845">
    <property type="pathway name" value="Activated NTRK2 signals through CDK5"/>
</dbReference>
<dbReference type="Reactome" id="R-HSA-9768919">
    <property type="pathway name" value="NPAS4 regulates expression of target genes"/>
</dbReference>
<dbReference type="SignaLink" id="P23560"/>
<dbReference type="SIGNOR" id="P23560"/>
<dbReference type="BioGRID-ORCS" id="627">
    <property type="hits" value="14 hits in 1076 CRISPR screens"/>
</dbReference>
<dbReference type="ChiTaRS" id="BDNF">
    <property type="organism name" value="human"/>
</dbReference>
<dbReference type="EvolutionaryTrace" id="P23560"/>
<dbReference type="GeneWiki" id="Brain-derived_neurotrophic_factor"/>
<dbReference type="GenomeRNAi" id="627"/>
<dbReference type="Pharos" id="P23560">
    <property type="development level" value="Tchem"/>
</dbReference>
<dbReference type="PRO" id="PR:P23560"/>
<dbReference type="Proteomes" id="UP000005640">
    <property type="component" value="Chromosome 11"/>
</dbReference>
<dbReference type="RNAct" id="P23560">
    <property type="molecule type" value="protein"/>
</dbReference>
<dbReference type="Bgee" id="ENSG00000176697">
    <property type="expression patterns" value="Expressed in saphenous vein and 148 other cell types or tissues"/>
</dbReference>
<dbReference type="ExpressionAtlas" id="P23560">
    <property type="expression patterns" value="baseline and differential"/>
</dbReference>
<dbReference type="GO" id="GO:0030424">
    <property type="term" value="C:axon"/>
    <property type="evidence" value="ECO:0000318"/>
    <property type="project" value="GO_Central"/>
</dbReference>
<dbReference type="GO" id="GO:0005737">
    <property type="term" value="C:cytoplasm"/>
    <property type="evidence" value="ECO:0000250"/>
    <property type="project" value="UniProtKB"/>
</dbReference>
<dbReference type="GO" id="GO:0030425">
    <property type="term" value="C:dendrite"/>
    <property type="evidence" value="ECO:0000318"/>
    <property type="project" value="GO_Central"/>
</dbReference>
<dbReference type="GO" id="GO:0005788">
    <property type="term" value="C:endoplasmic reticulum lumen"/>
    <property type="evidence" value="ECO:0000304"/>
    <property type="project" value="Reactome"/>
</dbReference>
<dbReference type="GO" id="GO:0005576">
    <property type="term" value="C:extracellular region"/>
    <property type="evidence" value="ECO:0000304"/>
    <property type="project" value="Reactome"/>
</dbReference>
<dbReference type="GO" id="GO:0005615">
    <property type="term" value="C:extracellular space"/>
    <property type="evidence" value="ECO:0000318"/>
    <property type="project" value="GO_Central"/>
</dbReference>
<dbReference type="GO" id="GO:0048471">
    <property type="term" value="C:perinuclear region of cytoplasm"/>
    <property type="evidence" value="ECO:0000250"/>
    <property type="project" value="UniProtKB"/>
</dbReference>
<dbReference type="GO" id="GO:0008021">
    <property type="term" value="C:synaptic vesicle"/>
    <property type="evidence" value="ECO:0000318"/>
    <property type="project" value="GO_Central"/>
</dbReference>
<dbReference type="GO" id="GO:0008083">
    <property type="term" value="F:growth factor activity"/>
    <property type="evidence" value="ECO:0000318"/>
    <property type="project" value="GO_Central"/>
</dbReference>
<dbReference type="GO" id="GO:0005163">
    <property type="term" value="F:nerve growth factor receptor binding"/>
    <property type="evidence" value="ECO:0000318"/>
    <property type="project" value="GO_Central"/>
</dbReference>
<dbReference type="GO" id="GO:0007411">
    <property type="term" value="P:axon guidance"/>
    <property type="evidence" value="ECO:0000304"/>
    <property type="project" value="BHF-UCL"/>
</dbReference>
<dbReference type="GO" id="GO:0031547">
    <property type="term" value="P:brain-derived neurotrophic factor receptor signaling pathway"/>
    <property type="evidence" value="ECO:0000304"/>
    <property type="project" value="BHF-UCL"/>
</dbReference>
<dbReference type="GO" id="GO:0007169">
    <property type="term" value="P:cell surface receptor protein tyrosine kinase signaling pathway"/>
    <property type="evidence" value="ECO:0000318"/>
    <property type="project" value="GO_Central"/>
</dbReference>
<dbReference type="GO" id="GO:0048668">
    <property type="term" value="P:collateral sprouting"/>
    <property type="evidence" value="ECO:0000314"/>
    <property type="project" value="BHF-UCL"/>
</dbReference>
<dbReference type="GO" id="GO:0050804">
    <property type="term" value="P:modulation of chemical synaptic transmission"/>
    <property type="evidence" value="ECO:0000318"/>
    <property type="project" value="GO_Central"/>
</dbReference>
<dbReference type="GO" id="GO:2001234">
    <property type="term" value="P:negative regulation of apoptotic signaling pathway"/>
    <property type="evidence" value="ECO:0000250"/>
    <property type="project" value="ARUK-UCL"/>
</dbReference>
<dbReference type="GO" id="GO:0010832">
    <property type="term" value="P:negative regulation of myotube differentiation"/>
    <property type="evidence" value="ECO:0000250"/>
    <property type="project" value="ParkinsonsUK-UCL"/>
</dbReference>
<dbReference type="GO" id="GO:0043524">
    <property type="term" value="P:negative regulation of neuron apoptotic process"/>
    <property type="evidence" value="ECO:0000318"/>
    <property type="project" value="GO_Central"/>
</dbReference>
<dbReference type="GO" id="GO:0021675">
    <property type="term" value="P:nerve development"/>
    <property type="evidence" value="ECO:0000318"/>
    <property type="project" value="GO_Central"/>
</dbReference>
<dbReference type="GO" id="GO:0038180">
    <property type="term" value="P:nerve growth factor signaling pathway"/>
    <property type="evidence" value="ECO:0000318"/>
    <property type="project" value="GO_Central"/>
</dbReference>
<dbReference type="GO" id="GO:0007399">
    <property type="term" value="P:nervous system development"/>
    <property type="evidence" value="ECO:0000304"/>
    <property type="project" value="ProtInc"/>
</dbReference>
<dbReference type="GO" id="GO:0048812">
    <property type="term" value="P:neuron projection morphogenesis"/>
    <property type="evidence" value="ECO:0000318"/>
    <property type="project" value="GO_Central"/>
</dbReference>
<dbReference type="GO" id="GO:0031550">
    <property type="term" value="P:positive regulation of brain-derived neurotrophic factor receptor signaling pathway"/>
    <property type="evidence" value="ECO:0000304"/>
    <property type="project" value="BHF-UCL"/>
</dbReference>
<dbReference type="GO" id="GO:0048672">
    <property type="term" value="P:positive regulation of collateral sprouting"/>
    <property type="evidence" value="ECO:0000314"/>
    <property type="project" value="BHF-UCL"/>
</dbReference>
<dbReference type="GO" id="GO:0010976">
    <property type="term" value="P:positive regulation of neuron projection development"/>
    <property type="evidence" value="ECO:0000250"/>
    <property type="project" value="ARUK-UCL"/>
</dbReference>
<dbReference type="GO" id="GO:1900122">
    <property type="term" value="P:positive regulation of receptor binding"/>
    <property type="evidence" value="ECO:0000314"/>
    <property type="project" value="ParkinsonsUK-UCL"/>
</dbReference>
<dbReference type="GO" id="GO:0051965">
    <property type="term" value="P:positive regulation of synapse assembly"/>
    <property type="evidence" value="ECO:0000314"/>
    <property type="project" value="BHF-UCL"/>
</dbReference>
<dbReference type="GO" id="GO:2000008">
    <property type="term" value="P:regulation of protein localization to cell surface"/>
    <property type="evidence" value="ECO:0000304"/>
    <property type="project" value="ParkinsonsUK-UCL"/>
</dbReference>
<dbReference type="GO" id="GO:0007416">
    <property type="term" value="P:synapse assembly"/>
    <property type="evidence" value="ECO:0000314"/>
    <property type="project" value="BHF-UCL"/>
</dbReference>
<dbReference type="FunFam" id="2.10.90.10:FF:000002">
    <property type="entry name" value="Brain-derived neurotrophic factor"/>
    <property type="match status" value="1"/>
</dbReference>
<dbReference type="Gene3D" id="2.10.90.10">
    <property type="entry name" value="Cystine-knot cytokines"/>
    <property type="match status" value="1"/>
</dbReference>
<dbReference type="InterPro" id="IPR020430">
    <property type="entry name" value="Brain-der_neurotrophic_factor"/>
</dbReference>
<dbReference type="InterPro" id="IPR029034">
    <property type="entry name" value="Cystine-knot_cytokine"/>
</dbReference>
<dbReference type="InterPro" id="IPR020408">
    <property type="entry name" value="Nerve_growth_factor-like"/>
</dbReference>
<dbReference type="InterPro" id="IPR002072">
    <property type="entry name" value="Nerve_growth_factor-rel"/>
</dbReference>
<dbReference type="InterPro" id="IPR019846">
    <property type="entry name" value="Nerve_growth_factor_CS"/>
</dbReference>
<dbReference type="PANTHER" id="PTHR11589:SF3">
    <property type="entry name" value="BRAIN-DERIVED NEUROTROPHIC FACTOR"/>
    <property type="match status" value="1"/>
</dbReference>
<dbReference type="PANTHER" id="PTHR11589">
    <property type="entry name" value="NERVE GROWTH FACTOR NGF -RELATED"/>
    <property type="match status" value="1"/>
</dbReference>
<dbReference type="Pfam" id="PF00243">
    <property type="entry name" value="NGF"/>
    <property type="match status" value="1"/>
</dbReference>
<dbReference type="PIRSF" id="PIRSF001789">
    <property type="entry name" value="NGF"/>
    <property type="match status" value="1"/>
</dbReference>
<dbReference type="PRINTS" id="PR01912">
    <property type="entry name" value="BDNFACTOR"/>
</dbReference>
<dbReference type="PRINTS" id="PR00268">
    <property type="entry name" value="NGF"/>
</dbReference>
<dbReference type="SMART" id="SM00140">
    <property type="entry name" value="NGF"/>
    <property type="match status" value="1"/>
</dbReference>
<dbReference type="SUPFAM" id="SSF57501">
    <property type="entry name" value="Cystine-knot cytokines"/>
    <property type="match status" value="1"/>
</dbReference>
<dbReference type="PROSITE" id="PS00248">
    <property type="entry name" value="NGF_1"/>
    <property type="match status" value="1"/>
</dbReference>
<dbReference type="PROSITE" id="PS50270">
    <property type="entry name" value="NGF_2"/>
    <property type="match status" value="1"/>
</dbReference>
<protein>
    <recommendedName>
        <fullName evidence="25">Neurotrophic factor BDNF precursor form</fullName>
        <shortName>proBDNF</shortName>
    </recommendedName>
    <alternativeName>
        <fullName>Abrineurin</fullName>
    </alternativeName>
    <alternativeName>
        <fullName>Brain-derived neurotrophic factor</fullName>
    </alternativeName>
    <component>
        <recommendedName>
            <fullName>Neurotrophic factor BDNF</fullName>
        </recommendedName>
    </component>
</protein>
<evidence type="ECO:0000250" key="1">
    <source>
        <dbReference type="UniProtKB" id="P21237"/>
    </source>
</evidence>
<evidence type="ECO:0000255" key="2"/>
<evidence type="ECO:0000269" key="3">
    <source>
    </source>
</evidence>
<evidence type="ECO:0000269" key="4">
    <source>
    </source>
</evidence>
<evidence type="ECO:0000269" key="5">
    <source>
    </source>
</evidence>
<evidence type="ECO:0000269" key="6">
    <source>
    </source>
</evidence>
<evidence type="ECO:0000269" key="7">
    <source>
    </source>
</evidence>
<evidence type="ECO:0000269" key="8">
    <source>
    </source>
</evidence>
<evidence type="ECO:0000269" key="9">
    <source>
    </source>
</evidence>
<evidence type="ECO:0000269" key="10">
    <source>
    </source>
</evidence>
<evidence type="ECO:0000269" key="11">
    <source>
    </source>
</evidence>
<evidence type="ECO:0000269" key="12">
    <source>
    </source>
</evidence>
<evidence type="ECO:0000269" key="13">
    <source>
    </source>
</evidence>
<evidence type="ECO:0000269" key="14">
    <source>
    </source>
</evidence>
<evidence type="ECO:0000269" key="15">
    <source>
    </source>
</evidence>
<evidence type="ECO:0000269" key="16">
    <source>
    </source>
</evidence>
<evidence type="ECO:0000269" key="17">
    <source>
    </source>
</evidence>
<evidence type="ECO:0000269" key="18">
    <source>
    </source>
</evidence>
<evidence type="ECO:0000269" key="19">
    <source>
    </source>
</evidence>
<evidence type="ECO:0000269" key="20">
    <source ref="8"/>
</evidence>
<evidence type="ECO:0000303" key="21">
    <source>
    </source>
</evidence>
<evidence type="ECO:0000303" key="22">
    <source>
    </source>
</evidence>
<evidence type="ECO:0000303" key="23">
    <source>
    </source>
</evidence>
<evidence type="ECO:0000303" key="24">
    <source>
    </source>
</evidence>
<evidence type="ECO:0000305" key="25"/>
<evidence type="ECO:0000305" key="26">
    <source>
    </source>
</evidence>
<evidence type="ECO:0000305" key="27">
    <source>
    </source>
</evidence>
<evidence type="ECO:0000305" key="28">
    <source>
    </source>
</evidence>
<evidence type="ECO:0000312" key="29">
    <source>
        <dbReference type="HGNC" id="HGNC:1033"/>
    </source>
</evidence>
<evidence type="ECO:0007744" key="30">
    <source>
        <dbReference type="PDB" id="1B8M"/>
    </source>
</evidence>
<evidence type="ECO:0007744" key="31">
    <source>
        <dbReference type="PDB" id="1BND"/>
    </source>
</evidence>
<evidence type="ECO:0007829" key="32">
    <source>
        <dbReference type="PDB" id="1BND"/>
    </source>
</evidence>
<keyword id="KW-0002">3D-structure</keyword>
<keyword id="KW-0877">Alternative promoter usage</keyword>
<keyword id="KW-0025">Alternative splicing</keyword>
<keyword id="KW-0165">Cleavage on pair of basic residues</keyword>
<keyword id="KW-0903">Direct protein sequencing</keyword>
<keyword id="KW-1015">Disulfide bond</keyword>
<keyword id="KW-0325">Glycoprotein</keyword>
<keyword id="KW-0339">Growth factor</keyword>
<keyword id="KW-1267">Proteomics identification</keyword>
<keyword id="KW-1185">Reference proteome</keyword>
<keyword id="KW-0964">Secreted</keyword>
<keyword id="KW-0732">Signal</keyword>
<name>BDNF_HUMAN</name>
<gene>
    <name evidence="24 29" type="primary">BDNF</name>
</gene>
<reference key="1">
    <citation type="journal article" date="1990" name="Proc. Natl. Acad. Sci. U.S.A.">
        <title>Molecular cloning of a human gene that is a member of the nerve growth factor family.</title>
        <authorList>
            <person name="Jones K.R."/>
            <person name="Reichardt L.F."/>
        </authorList>
    </citation>
    <scope>NUCLEOTIDE SEQUENCE [GENOMIC DNA]</scope>
    <scope>ALTERNATIVE SPLICING (ISOFORM 1)</scope>
    <scope>TISSUE SPECIFICITY</scope>
</reference>
<reference key="2">
    <citation type="journal article" date="1991" name="Genomics">
        <title>Human and rat brain-derived neurotrophic factor and neurotrophin-3: gene structures, distributions, and chromosomal localizations.</title>
        <authorList>
            <person name="Maisonpierre P.C."/>
            <person name="le Beau M.M."/>
            <person name="Espinosa R. III"/>
            <person name="Ip N.Y."/>
            <person name="Belluscio L."/>
            <person name="de la Monte S.M."/>
            <person name="Squinto S."/>
            <person name="Furth M.E."/>
            <person name="Yancopoulos G.D."/>
        </authorList>
    </citation>
    <scope>NUCLEOTIDE SEQUENCE [GENOMIC DNA / MRNA] (ISOFORM 1)</scope>
</reference>
<reference key="3">
    <citation type="journal article" date="1992" name="Biochem. Biophys. Res. Commun.">
        <title>Characterization of the 5'-flanking region of the human brain-derived neurotrophic factor gene.</title>
        <authorList>
            <person name="Shintani A."/>
            <person name="Ono Y."/>
            <person name="Kaisho Y."/>
            <person name="Igarashi K."/>
        </authorList>
    </citation>
    <scope>NUCLEOTIDE SEQUENCE [MRNA] (ISOFORM 1)</scope>
</reference>
<reference key="4">
    <citation type="journal article" date="2005" name="Am. J. Med. Genet. B Neuropsychiatr. Genet.">
        <title>Human brain derived neurotrophic factor (BDNF) genes, splicing patterns, and assessments of associations with substance abuse and Parkinson's Disease.</title>
        <authorList>
            <person name="Liu Q.-R."/>
            <person name="Walther D."/>
            <person name="Drgon T."/>
            <person name="Polesskaya O."/>
            <person name="Lesnick T.G."/>
            <person name="Strain K.J."/>
            <person name="de Andrade M."/>
            <person name="Bower J.H."/>
            <person name="Maraganore D.M."/>
            <person name="Uhl G.R."/>
        </authorList>
    </citation>
    <scope>NUCLEOTIDE SEQUENCE [GENOMIC DNA / MRNA] (ISOFORMS 1; 2 AND 3)</scope>
    <scope>ALTERNATIVE SPLICING</scope>
</reference>
<reference key="5">
    <citation type="journal article" date="2007" name="Genomics">
        <title>Dissecting the human BDNF locus: bidirectional transcription, complex splicing, and multiple promoters.</title>
        <authorList>
            <person name="Pruunsild P."/>
            <person name="Kazantseva A."/>
            <person name="Aid T."/>
            <person name="Palm K."/>
            <person name="Timmusk T."/>
        </authorList>
    </citation>
    <scope>NUCLEOTIDE SEQUENCE [MRNA] (ISOFORMS 1; 2; 3; 4 AND 5)</scope>
    <scope>ALTERNATIVE SPLICING</scope>
    <scope>ALTERNATIVE PROMOTER USAGE</scope>
    <scope>TISSUE SPECIFICITY</scope>
    <source>
        <tissue>Brain</tissue>
    </source>
</reference>
<reference key="6">
    <citation type="submission" date="1995-05" db="EMBL/GenBank/DDBJ databases">
        <title>A cDNA clone of human brain-derived neurotrophic factor (HUMBDNFD).</title>
        <authorList>
            <person name="Cheng Y."/>
            <person name="Gu J."/>
        </authorList>
    </citation>
    <scope>NUCLEOTIDE SEQUENCE [MRNA] (ISOFORM 1)</scope>
</reference>
<reference key="7">
    <citation type="submission" date="2001-07" db="EMBL/GenBank/DDBJ databases">
        <authorList>
            <person name="Wu J."/>
            <person name="Zhang B."/>
            <person name="Zhou Y."/>
            <person name="Peng X."/>
            <person name="Yuan J."/>
            <person name="Qiang B."/>
        </authorList>
    </citation>
    <scope>NUCLEOTIDE SEQUENCE [MRNA] (ISOFORM 1)</scope>
</reference>
<reference key="8">
    <citation type="submission" date="2004-06" db="EMBL/GenBank/DDBJ databases">
        <authorList>
            <person name="Perez-Pinera P."/>
            <person name="Gonzalez-Martinez T."/>
            <person name="Garcia-Suarez O."/>
            <person name="Perez-Perez M."/>
            <person name="Esteban I."/>
            <person name="Monjil D."/>
            <person name="Vega J.A."/>
        </authorList>
    </citation>
    <scope>NUCLEOTIDE SEQUENCE [MRNA] (ISOFORM 1)</scope>
    <scope>VARIANT MET-66</scope>
</reference>
<reference key="9">
    <citation type="journal article" date="2004" name="Nat. Genet.">
        <title>Complete sequencing and characterization of 21,243 full-length human cDNAs.</title>
        <authorList>
            <person name="Ota T."/>
            <person name="Suzuki Y."/>
            <person name="Nishikawa T."/>
            <person name="Otsuki T."/>
            <person name="Sugiyama T."/>
            <person name="Irie R."/>
            <person name="Wakamatsu A."/>
            <person name="Hayashi K."/>
            <person name="Sato H."/>
            <person name="Nagai K."/>
            <person name="Kimura K."/>
            <person name="Makita H."/>
            <person name="Sekine M."/>
            <person name="Obayashi M."/>
            <person name="Nishi T."/>
            <person name="Shibahara T."/>
            <person name="Tanaka T."/>
            <person name="Ishii S."/>
            <person name="Yamamoto J."/>
            <person name="Saito K."/>
            <person name="Kawai Y."/>
            <person name="Isono Y."/>
            <person name="Nakamura Y."/>
            <person name="Nagahari K."/>
            <person name="Murakami K."/>
            <person name="Yasuda T."/>
            <person name="Iwayanagi T."/>
            <person name="Wagatsuma M."/>
            <person name="Shiratori A."/>
            <person name="Sudo H."/>
            <person name="Hosoiri T."/>
            <person name="Kaku Y."/>
            <person name="Kodaira H."/>
            <person name="Kondo H."/>
            <person name="Sugawara M."/>
            <person name="Takahashi M."/>
            <person name="Kanda K."/>
            <person name="Yokoi T."/>
            <person name="Furuya T."/>
            <person name="Kikkawa E."/>
            <person name="Omura Y."/>
            <person name="Abe K."/>
            <person name="Kamihara K."/>
            <person name="Katsuta N."/>
            <person name="Sato K."/>
            <person name="Tanikawa M."/>
            <person name="Yamazaki M."/>
            <person name="Ninomiya K."/>
            <person name="Ishibashi T."/>
            <person name="Yamashita H."/>
            <person name="Murakawa K."/>
            <person name="Fujimori K."/>
            <person name="Tanai H."/>
            <person name="Kimata M."/>
            <person name="Watanabe M."/>
            <person name="Hiraoka S."/>
            <person name="Chiba Y."/>
            <person name="Ishida S."/>
            <person name="Ono Y."/>
            <person name="Takiguchi S."/>
            <person name="Watanabe S."/>
            <person name="Yosida M."/>
            <person name="Hotuta T."/>
            <person name="Kusano J."/>
            <person name="Kanehori K."/>
            <person name="Takahashi-Fujii A."/>
            <person name="Hara H."/>
            <person name="Tanase T.-O."/>
            <person name="Nomura Y."/>
            <person name="Togiya S."/>
            <person name="Komai F."/>
            <person name="Hara R."/>
            <person name="Takeuchi K."/>
            <person name="Arita M."/>
            <person name="Imose N."/>
            <person name="Musashino K."/>
            <person name="Yuuki H."/>
            <person name="Oshima A."/>
            <person name="Sasaki N."/>
            <person name="Aotsuka S."/>
            <person name="Yoshikawa Y."/>
            <person name="Matsunawa H."/>
            <person name="Ichihara T."/>
            <person name="Shiohata N."/>
            <person name="Sano S."/>
            <person name="Moriya S."/>
            <person name="Momiyama H."/>
            <person name="Satoh N."/>
            <person name="Takami S."/>
            <person name="Terashima Y."/>
            <person name="Suzuki O."/>
            <person name="Nakagawa S."/>
            <person name="Senoh A."/>
            <person name="Mizoguchi H."/>
            <person name="Goto Y."/>
            <person name="Shimizu F."/>
            <person name="Wakebe H."/>
            <person name="Hishigaki H."/>
            <person name="Watanabe T."/>
            <person name="Sugiyama A."/>
            <person name="Takemoto M."/>
            <person name="Kawakami B."/>
            <person name="Yamazaki M."/>
            <person name="Watanabe K."/>
            <person name="Kumagai A."/>
            <person name="Itakura S."/>
            <person name="Fukuzumi Y."/>
            <person name="Fujimori Y."/>
            <person name="Komiyama M."/>
            <person name="Tashiro H."/>
            <person name="Tanigami A."/>
            <person name="Fujiwara T."/>
            <person name="Ono T."/>
            <person name="Yamada K."/>
            <person name="Fujii Y."/>
            <person name="Ozaki K."/>
            <person name="Hirao M."/>
            <person name="Ohmori Y."/>
            <person name="Kawabata A."/>
            <person name="Hikiji T."/>
            <person name="Kobatake N."/>
            <person name="Inagaki H."/>
            <person name="Ikema Y."/>
            <person name="Okamoto S."/>
            <person name="Okitani R."/>
            <person name="Kawakami T."/>
            <person name="Noguchi S."/>
            <person name="Itoh T."/>
            <person name="Shigeta K."/>
            <person name="Senba T."/>
            <person name="Matsumura K."/>
            <person name="Nakajima Y."/>
            <person name="Mizuno T."/>
            <person name="Morinaga M."/>
            <person name="Sasaki M."/>
            <person name="Togashi T."/>
            <person name="Oyama M."/>
            <person name="Hata H."/>
            <person name="Watanabe M."/>
            <person name="Komatsu T."/>
            <person name="Mizushima-Sugano J."/>
            <person name="Satoh T."/>
            <person name="Shirai Y."/>
            <person name="Takahashi Y."/>
            <person name="Nakagawa K."/>
            <person name="Okumura K."/>
            <person name="Nagase T."/>
            <person name="Nomura N."/>
            <person name="Kikuchi H."/>
            <person name="Masuho Y."/>
            <person name="Yamashita R."/>
            <person name="Nakai K."/>
            <person name="Yada T."/>
            <person name="Nakamura Y."/>
            <person name="Ohara O."/>
            <person name="Isogai T."/>
            <person name="Sugano S."/>
        </authorList>
    </citation>
    <scope>NUCLEOTIDE SEQUENCE [LARGE SCALE MRNA] (ISOFORMS 1 AND 2)</scope>
    <source>
        <tissue>Brain</tissue>
    </source>
</reference>
<reference key="10">
    <citation type="journal article" date="2006" name="Nature">
        <title>Human chromosome 11 DNA sequence and analysis including novel gene identification.</title>
        <authorList>
            <person name="Taylor T.D."/>
            <person name="Noguchi H."/>
            <person name="Totoki Y."/>
            <person name="Toyoda A."/>
            <person name="Kuroki Y."/>
            <person name="Dewar K."/>
            <person name="Lloyd C."/>
            <person name="Itoh T."/>
            <person name="Takeda T."/>
            <person name="Kim D.-W."/>
            <person name="She X."/>
            <person name="Barlow K.F."/>
            <person name="Bloom T."/>
            <person name="Bruford E."/>
            <person name="Chang J.L."/>
            <person name="Cuomo C.A."/>
            <person name="Eichler E."/>
            <person name="FitzGerald M.G."/>
            <person name="Jaffe D.B."/>
            <person name="LaButti K."/>
            <person name="Nicol R."/>
            <person name="Park H.-S."/>
            <person name="Seaman C."/>
            <person name="Sougnez C."/>
            <person name="Yang X."/>
            <person name="Zimmer A.R."/>
            <person name="Zody M.C."/>
            <person name="Birren B.W."/>
            <person name="Nusbaum C."/>
            <person name="Fujiyama A."/>
            <person name="Hattori M."/>
            <person name="Rogers J."/>
            <person name="Lander E.S."/>
            <person name="Sakaki Y."/>
        </authorList>
    </citation>
    <scope>NUCLEOTIDE SEQUENCE [LARGE SCALE GENOMIC DNA]</scope>
</reference>
<reference key="11">
    <citation type="submission" date="2005-09" db="EMBL/GenBank/DDBJ databases">
        <authorList>
            <person name="Mural R.J."/>
            <person name="Istrail S."/>
            <person name="Sutton G.G."/>
            <person name="Florea L."/>
            <person name="Halpern A.L."/>
            <person name="Mobarry C.M."/>
            <person name="Lippert R."/>
            <person name="Walenz B."/>
            <person name="Shatkay H."/>
            <person name="Dew I."/>
            <person name="Miller J.R."/>
            <person name="Flanigan M.J."/>
            <person name="Edwards N.J."/>
            <person name="Bolanos R."/>
            <person name="Fasulo D."/>
            <person name="Halldorsson B.V."/>
            <person name="Hannenhalli S."/>
            <person name="Turner R."/>
            <person name="Yooseph S."/>
            <person name="Lu F."/>
            <person name="Nusskern D.R."/>
            <person name="Shue B.C."/>
            <person name="Zheng X.H."/>
            <person name="Zhong F."/>
            <person name="Delcher A.L."/>
            <person name="Huson D.H."/>
            <person name="Kravitz S.A."/>
            <person name="Mouchard L."/>
            <person name="Reinert K."/>
            <person name="Remington K.A."/>
            <person name="Clark A.G."/>
            <person name="Waterman M.S."/>
            <person name="Eichler E.E."/>
            <person name="Adams M.D."/>
            <person name="Hunkapiller M.W."/>
            <person name="Myers E.W."/>
            <person name="Venter J.C."/>
        </authorList>
    </citation>
    <scope>NUCLEOTIDE SEQUENCE [LARGE SCALE GENOMIC DNA]</scope>
</reference>
<reference key="12">
    <citation type="submission" date="2005-07" db="EMBL/GenBank/DDBJ databases">
        <authorList>
            <person name="Mural R.J."/>
            <person name="Istrail S."/>
            <person name="Sutton G.G."/>
            <person name="Florea L."/>
            <person name="Halpern A.L."/>
            <person name="Mobarry C.M."/>
            <person name="Lippert R."/>
            <person name="Walenz B."/>
            <person name="Shatkay H."/>
            <person name="Dew I."/>
            <person name="Miller J.R."/>
            <person name="Flanigan M.J."/>
            <person name="Edwards N.J."/>
            <person name="Bolanos R."/>
            <person name="Fasulo D."/>
            <person name="Halldorsson B.V."/>
            <person name="Hannenhalli S."/>
            <person name="Turner R."/>
            <person name="Yooseph S."/>
            <person name="Lu F."/>
            <person name="Nusskern D.R."/>
            <person name="Shue B.C."/>
            <person name="Zheng X.H."/>
            <person name="Zhong F."/>
            <person name="Delcher A.L."/>
            <person name="Huson D.H."/>
            <person name="Kravitz S.A."/>
            <person name="Mouchard L."/>
            <person name="Reinert K."/>
            <person name="Remington K.A."/>
            <person name="Clark A.G."/>
            <person name="Waterman M.S."/>
            <person name="Eichler E.E."/>
            <person name="Adams M.D."/>
            <person name="Hunkapiller M.W."/>
            <person name="Myers E.W."/>
            <person name="Venter J.C."/>
        </authorList>
    </citation>
    <scope>NUCLEOTIDE SEQUENCE [LARGE SCALE GENOMIC DNA]</scope>
</reference>
<reference key="13">
    <citation type="journal article" date="2004" name="Genome Res.">
        <title>The status, quality, and expansion of the NIH full-length cDNA project: the Mammalian Gene Collection (MGC).</title>
        <authorList>
            <consortium name="The MGC Project Team"/>
        </authorList>
    </citation>
    <scope>NUCLEOTIDE SEQUENCE [LARGE SCALE MRNA] (ISOFORM 1)</scope>
    <source>
        <tissue>Brain</tissue>
    </source>
</reference>
<reference key="14">
    <citation type="journal article" date="1991" name="Neuron">
        <title>Evolutionary studies of the nerve growth factor family reveal a novel member abundantly expressed in Xenopus ovary.</title>
        <authorList>
            <person name="Hallboeoek F."/>
            <person name="Ibanez C.F."/>
            <person name="Persson H."/>
        </authorList>
    </citation>
    <scope>NUCLEOTIDE SEQUENCE [GENOMIC DNA] OF 185-227</scope>
    <source>
        <tissue>Leukocyte</tissue>
    </source>
</reference>
<reference key="15">
    <citation type="journal article" date="1995" name="Protein Expr. Purif.">
        <title>Purification and identification of brain-derived neurotrophic factor from human serum.</title>
        <authorList>
            <person name="Rosenfeld R.D."/>
            <person name="Zeni L."/>
            <person name="Haniu M."/>
            <person name="Talvenheimo J."/>
            <person name="Radka S.F."/>
            <person name="Bennett L."/>
            <person name="Miller J.A."/>
            <person name="Welcher A.A."/>
        </authorList>
    </citation>
    <scope>PROTEIN SEQUENCE OF 129-144</scope>
    <scope>SUBCELLULAR LOCATION</scope>
    <scope>INTERACTION WITH NTRK2</scope>
    <source>
        <tissue>Serum</tissue>
    </source>
</reference>
<reference key="16">
    <citation type="journal article" date="2001" name="Nature">
        <title>Molecular phylogenetics and the origins of placental mammals.</title>
        <authorList>
            <person name="Murphy W.J."/>
            <person name="Eizirik E."/>
            <person name="Johnson W.E."/>
            <person name="Zhang Y.-P."/>
            <person name="Ryder O.A."/>
            <person name="O'Brien S.J."/>
        </authorList>
    </citation>
    <scope>NUCLEOTIDE SEQUENCE [GENOMIC DNA] OF 12-197</scope>
</reference>
<reference key="17">
    <citation type="journal article" date="2001" name="J. Biol. Chem.">
        <title>Biosynthesis and post-translational processing of the precursor to brain-derived neurotrophic factor.</title>
        <authorList>
            <person name="Mowla S.J."/>
            <person name="Farhadi H.F."/>
            <person name="Pareek S."/>
            <person name="Atwal J.K."/>
            <person name="Morris S.J."/>
            <person name="Seidah N.G."/>
            <person name="Murphy R.A."/>
        </authorList>
    </citation>
    <scope>FUNCTION</scope>
    <scope>SUBCELLULAR LOCATION</scope>
    <scope>INTERACTION WITH NTRK2</scope>
    <scope>PROTEOLYTIC CLEAVAGE</scope>
    <scope>PARTIAL PROTEIN SEQUENCE</scope>
    <scope>TISSUE SPECIFICITY</scope>
    <scope>GLYCOSYLATION AT ASN-121</scope>
    <scope>MUTAGENESIS OF ARG-54</scope>
</reference>
<reference key="18">
    <citation type="journal article" date="2009" name="Arch. Oral Biol.">
        <title>Identification of pro- and mature brain-derived neurotrophic factor in human saliva.</title>
        <authorList>
            <person name="Mandel A.L."/>
            <person name="Ozdener H."/>
            <person name="Utermohlen V."/>
        </authorList>
    </citation>
    <scope>SUBCELLULAR LOCATION</scope>
    <scope>PROTEOLYTIC CLEAVAGE</scope>
    <scope>VARIANT MET-66</scope>
    <scope>GLYCOSYLATION AT ASN-121</scope>
    <scope>TISSUE SPECIFICITY</scope>
</reference>
<reference key="19">
    <citation type="journal article" date="2014" name="Neuron">
        <title>SorCS2 regulates dopaminergic wiring and is processed into an apoptotic two-chain receptor in peripheral glia.</title>
        <authorList>
            <person name="Glerup S."/>
            <person name="Olsen D."/>
            <person name="Vaegter C.B."/>
            <person name="Gustafsen C."/>
            <person name="Sjoegaard S.S."/>
            <person name="Hermey G."/>
            <person name="Kjolby M."/>
            <person name="Molgaard S."/>
            <person name="Ulrichsen M."/>
            <person name="Boggild S."/>
            <person name="Skeldal S."/>
            <person name="Fjorback A.N."/>
            <person name="Nyengaard J.R."/>
            <person name="Jacobsen J."/>
            <person name="Bender D."/>
            <person name="Bjarkam C.R."/>
            <person name="Soerensen E.S."/>
            <person name="Fuechtbauer E.M."/>
            <person name="Eichele G."/>
            <person name="Madsen P."/>
            <person name="Willnow T.E."/>
            <person name="Petersen C.M."/>
            <person name="Nykjaer A."/>
        </authorList>
    </citation>
    <scope>INTERACTION WITH SORCS2 AND NGFR</scope>
    <scope>FUNCTION</scope>
</reference>
<reference evidence="31" key="20">
    <citation type="journal article" date="1995" name="Biochemistry">
        <title>Structure of the brain-derived neurotrophic factor/neurotrophin 3 heterodimer.</title>
        <authorList>
            <person name="Robinson R.C."/>
            <person name="Radziejewski C."/>
            <person name="Stuart D.I."/>
            <person name="Jones E.Y."/>
        </authorList>
    </citation>
    <scope>X-RAY CRYSTALLOGRAPHY (2.30 ANGSTROMS) OF 129-247 IN COMPLEX WITH NTF3</scope>
    <scope>DISULFIDE BONDS</scope>
</reference>
<reference evidence="30" key="21">
    <citation type="journal article" date="1999" name="Protein Sci.">
        <title>The structures of the neurotrophin 4 homodimer and the brain-derived neurotrophic factor/neurotrophin 4 heterodimer reveal a common Trk-binding site.</title>
        <authorList>
            <person name="Robinson R.C."/>
            <person name="Radziejewski C."/>
            <person name="Spraggon G."/>
            <person name="Greenwald J."/>
            <person name="Kostura M.R."/>
            <person name="Burtnick L.D."/>
            <person name="Stuart D.I."/>
            <person name="Choe S."/>
            <person name="Jones E.Y."/>
        </authorList>
    </citation>
    <scope>X-RAY CRYSTALLOGRAPHY (2.75 ANGSTROMS) OF 129-247 IN COMPLEX WITH NTF4</scope>
    <scope>DISULFIDE BONDS</scope>
</reference>
<reference key="22">
    <citation type="journal article" date="2004" name="Hum. Mol. Genet.">
        <title>Association of BDNF with anorexia, bulimia and age of onset of weight loss in six European populations.</title>
        <authorList>
            <person name="Ribases M."/>
            <person name="Gratacos M."/>
            <person name="Fernandez-Aranda F."/>
            <person name="Bellodi L."/>
            <person name="Boni C."/>
            <person name="Anderluh M."/>
            <person name="Cavallini M.C."/>
            <person name="Cellini E."/>
            <person name="Di Bella D."/>
            <person name="Erzegovesi S."/>
            <person name="Foulon C."/>
            <person name="Gabrovsek M."/>
            <person name="Gorwood P."/>
            <person name="Hebebrand J."/>
            <person name="Hinney A."/>
            <person name="Holliday J."/>
            <person name="Hu X."/>
            <person name="Karwautz A."/>
            <person name="Kipman A."/>
            <person name="Komel R."/>
            <person name="Nacmias B."/>
            <person name="Remschmidt H."/>
            <person name="Ricca V."/>
            <person name="Sorbi S."/>
            <person name="Wagner G."/>
            <person name="Treasure J."/>
            <person name="Collier D.A."/>
            <person name="Estivill X."/>
        </authorList>
    </citation>
    <scope>VARIANT MET-66</scope>
</reference>
<reference key="23">
    <citation type="journal article" date="2008" name="N. Engl. J. Med.">
        <title>Brain-derived neurotrophic factor and obesity in the WAGR syndrome.</title>
        <authorList>
            <person name="Han J.C."/>
            <person name="Liu Q.-R."/>
            <person name="Jones M."/>
            <person name="Levinn R.L."/>
            <person name="Menzie C.M."/>
            <person name="Jefferson-George K.S."/>
            <person name="Adler-Wailes D.C."/>
            <person name="Sanford E.L."/>
            <person name="Lacbawan F.L."/>
            <person name="Uhl G.R."/>
            <person name="Rennert O.M."/>
            <person name="Yanovski J.A."/>
        </authorList>
    </citation>
    <scope>INVOLVEMENT IN WAGRO SYNDROME</scope>
</reference>
<reference key="24">
    <citation type="journal article" date="2008" name="N. Engl. J. Med.">
        <authorList>
            <person name="Han J.C."/>
            <person name="Liu Q.-R."/>
            <person name="Jones M."/>
            <person name="Levinn R.L."/>
            <person name="Menzie C.M."/>
            <person name="Jefferson-George K.S."/>
            <person name="Adler-Wailes D.C."/>
            <person name="Sanford E.L."/>
            <person name="Lacbawan F.L."/>
            <person name="Uhl G.R."/>
            <person name="Rennert O.M."/>
            <person name="Yanovski J.A."/>
        </authorList>
    </citation>
    <scope>ERRATUM OF PUBMED:18753648</scope>
</reference>
<reference key="25">
    <citation type="journal article" date="1999" name="Nat. Genet.">
        <title>Characterization of single-nucleotide polymorphisms in coding regions of human genes.</title>
        <authorList>
            <person name="Cargill M."/>
            <person name="Altshuler D."/>
            <person name="Ireland J."/>
            <person name="Sklar P."/>
            <person name="Ardlie K."/>
            <person name="Patil N."/>
            <person name="Shaw N."/>
            <person name="Lane C.R."/>
            <person name="Lim E.P."/>
            <person name="Kalyanaraman N."/>
            <person name="Nemesh J."/>
            <person name="Ziaugra L."/>
            <person name="Friedland L."/>
            <person name="Rolfe A."/>
            <person name="Warrington J."/>
            <person name="Lipshutz R."/>
            <person name="Daley G.Q."/>
            <person name="Lander E.S."/>
        </authorList>
    </citation>
    <scope>VARIANT MET-66</scope>
</reference>
<reference key="26">
    <citation type="journal article" date="1999" name="Nat. Genet.">
        <authorList>
            <person name="Cargill M."/>
            <person name="Altshuler D."/>
            <person name="Ireland J."/>
            <person name="Sklar P."/>
            <person name="Ardlie K."/>
            <person name="Patil N."/>
            <person name="Shaw N."/>
            <person name="Lane C.R."/>
            <person name="Lim E.P."/>
            <person name="Kalyanaraman N."/>
            <person name="Nemesh J."/>
            <person name="Ziaugra L."/>
            <person name="Friedland L."/>
            <person name="Rolfe A."/>
            <person name="Warrington J."/>
            <person name="Lipshutz R."/>
            <person name="Daley G.Q."/>
            <person name="Lander E.S."/>
        </authorList>
    </citation>
    <scope>ERRATUM OF PUBMED:10391209</scope>
</reference>
<reference key="27">
    <citation type="journal article" date="2002" name="Am. J. Med. Genet.">
        <title>Idiopathic congenital central hypoventilation syndrome: evaluation of brain-derived neurotrophic factor genomic DNA sequence variation.</title>
        <authorList>
            <person name="Weese-Mayer D.E."/>
            <person name="Bolk S."/>
            <person name="Silvestri J.M."/>
            <person name="Chakravarti A."/>
        </authorList>
    </citation>
    <scope>VARIANT ILE-2</scope>
</reference>
<reference key="28">
    <citation type="journal article" date="2003" name="Am. J. Hum. Genet.">
        <title>Sequence variants of the brain-derived neurotrophic factor (BDNF) gene are strongly associated with obsessive-compulsive disorder.</title>
        <authorList>
            <person name="Hall D."/>
            <person name="Dhilla A."/>
            <person name="Charalambous A."/>
            <person name="Gogos J.A."/>
            <person name="Karayiorgou M."/>
        </authorList>
    </citation>
    <scope>VARIANT MET-66</scope>
    <scope>ROLE OF VARIANT MET-66 IN OBSESSIVE-COMPULSIVE DISORDER</scope>
</reference>
<reference key="29">
    <citation type="journal article" date="2003" name="Cell">
        <title>The BDNF val66met polymorphism affects activity-dependent secretion of BDNF and human memory and hippocampal function.</title>
        <authorList>
            <person name="Egan M.F."/>
            <person name="Kojima M."/>
            <person name="Callicott J.H."/>
            <person name="Goldberg T.E."/>
            <person name="Kolachana B.S."/>
            <person name="Bertolino A."/>
            <person name="Zaitsev E."/>
            <person name="Gold B."/>
            <person name="Goldman D."/>
            <person name="Dean M."/>
            <person name="Lu B."/>
            <person name="Weinberger D.R."/>
        </authorList>
    </citation>
    <scope>VARIANT MET-66</scope>
    <scope>CHARACTERIZATION OF VARIANT MET-66</scope>
    <scope>ROLE IN EPISODIC MEMORY</scope>
</reference>
<reference key="30">
    <citation type="journal article" date="2003" name="Hum. Genet.">
        <title>Molecular analysis of congenital central hypoventilation syndrome.</title>
        <authorList>
            <person name="Sasaki A."/>
            <person name="Kanai M."/>
            <person name="Kijima K."/>
            <person name="Akaba K."/>
            <person name="Hashimoto M."/>
            <person name="Hasegawa H."/>
            <person name="Otaki S."/>
            <person name="Koizumi T."/>
            <person name="Kusuda S."/>
            <person name="Ogawa Y."/>
            <person name="Tuchiya K."/>
            <person name="Yamamoto W."/>
            <person name="Nakamura T."/>
            <person name="Hayasaka K."/>
        </authorList>
    </citation>
    <scope>VARIANT MET-66</scope>
</reference>
<reference key="31">
    <citation type="journal article" date="2003" name="Mol. Psychiatry">
        <title>Met66 in the brain-derived neurotrophic factor (BDNF) precursor is associated with anorexia nervosa restrictive type.</title>
        <authorList>
            <person name="Ribases M."/>
            <person name="Gratacos M."/>
            <person name="Armengol L."/>
            <person name="de Cid R."/>
            <person name="Badia A."/>
            <person name="Jimenez L."/>
            <person name="Solano R."/>
            <person name="Vallejo J."/>
            <person name="Fernandez F."/>
            <person name="Estivill X."/>
        </authorList>
    </citation>
    <scope>VARIANT MET-66</scope>
    <scope>ASSOCIATION OF VARIANT MET-66 WITH ANR</scope>
</reference>
<reference key="32">
    <citation type="journal article" date="2018" name="Mol. Psychiatry">
        <title>Mapping autosomal recessive intellectual disability: combined microarray and exome sequencing identifies 26 novel candidate genes in 192 consanguineous families.</title>
        <authorList>
            <person name="Harripaul R."/>
            <person name="Vasli N."/>
            <person name="Mikhailov A."/>
            <person name="Rafiq M.A."/>
            <person name="Mittal K."/>
            <person name="Windpassinger C."/>
            <person name="Sheikh T.I."/>
            <person name="Noor A."/>
            <person name="Mahmood H."/>
            <person name="Downey S."/>
            <person name="Johnson M."/>
            <person name="Vleuten K."/>
            <person name="Bell L."/>
            <person name="Ilyas M."/>
            <person name="Khan F.S."/>
            <person name="Khan V."/>
            <person name="Moradi M."/>
            <person name="Ayaz M."/>
            <person name="Naeem F."/>
            <person name="Heidari A."/>
            <person name="Ahmed I."/>
            <person name="Ghadami S."/>
            <person name="Agha Z."/>
            <person name="Zeinali S."/>
            <person name="Qamar R."/>
            <person name="Mozhdehipanah H."/>
            <person name="John P."/>
            <person name="Mir A."/>
            <person name="Ansar M."/>
            <person name="French L."/>
            <person name="Ayub M."/>
            <person name="Vincent J.B."/>
        </authorList>
    </citation>
    <scope>VARIANT THR-122</scope>
</reference>
<reference key="33">
    <citation type="journal article" date="2018" name="Neuron">
        <title>The BDNF Val66Met Prodomain Disassembles Dendritic Spines Altering Fear Extinction Circuitry and Behavior.</title>
        <authorList>
            <person name="Giza J.I."/>
            <person name="Kim J."/>
            <person name="Meyer H.C."/>
            <person name="Anastasia A."/>
            <person name="Dincheva I."/>
            <person name="Zheng C.I."/>
            <person name="Lopez K."/>
            <person name="Bains H."/>
            <person name="Yang J."/>
            <person name="Bracken C."/>
            <person name="Liston C."/>
            <person name="Jing D."/>
            <person name="Hempstead B.L."/>
            <person name="Lee F.S."/>
        </authorList>
    </citation>
    <scope>FUNCTION</scope>
    <scope>CHARACTERIZATION OF VARIANT MET-66</scope>
</reference>
<accession>P23560</accession>
<accession>A7LA85</accession>
<accession>A7LA92</accession>
<accession>D3DQZ2</accession>
<accession>Q598Q1</accession>
<accession>Q6DN19</accession>
<accession>Q6YNR2</accession>
<accession>Q6YNR3</accession>
<accession>Q9BYY7</accession>
<accession>Q9UC24</accession>
<comment type="function">
    <text evidence="5 7 17">Important signaling molecule that activates signaling cascades downstream of NTRK2 (PubMed:11152678). During development, promotes the survival and differentiation of selected neuronal populations of the peripheral and central nervous systems. Participates in axonal growth, pathfinding and in the modulation of dendritic growth and morphology. Major regulator of synaptic transmission and plasticity at adult synapses in many regions of the CNS. The versatility of BDNF is emphasized by its contribution to a range of adaptive neuronal responses including long-term potentiation (LTP), long-term depression (LTD), certain forms of short-term synaptic plasticity, as well as homeostatic regulation of intrinsic neuronal excitability.</text>
</comment>
<comment type="function">
    <molecule>Neurotrophic factor BDNF precursor form</molecule>
    <text evidence="1 15 17">Important signaling molecule that activates signaling cascades downstream of NTRK2. Activates signaling cascades via the heterodimeric receptor formed by NGFR and SORCS2 (PubMed:24908487, PubMed:29909994). Signaling via NGFR and SORCS2 plays a role in synaptic plasticity and long-term depression (LTD). Binding to NGFR and SORCS2 promotes neuronal apoptosis. Promotes neuronal growth cone collapse (By similarity).</text>
</comment>
<comment type="subunit">
    <text evidence="4 5 15 18 19">Monomers and homodimers. Binds to NTRK2/TRKB (PubMed:11152678, PubMed:8527932). Can form heterodimers with other neurotrophin family members, such as NTF3 and NTF4 (in vitro), but the physiological relevance of this is not clear (PubMed:10631974, PubMed:7703225). BDNF precursor form: interacts with the heterodimer formed by NGFR and SORCS2 (PubMed:24908487).</text>
</comment>
<comment type="interaction">
    <interactant intactId="EBI-1026003">
        <id>P23560</id>
    </interactant>
    <interactant intactId="EBI-1025994">
        <id>P20783</id>
        <label>NTF3</label>
    </interactant>
    <organismsDiffer>false</organismsDiffer>
    <experiments>3</experiments>
</comment>
<comment type="interaction">
    <interactant intactId="EBI-1026003">
        <id>P23560</id>
    </interactant>
    <interactant intactId="EBI-3907456">
        <id>P34130</id>
        <label>NTF4</label>
    </interactant>
    <organismsDiffer>false</organismsDiffer>
    <experiments>6</experiments>
</comment>
<comment type="interaction">
    <interactant intactId="EBI-12275524">
        <id>P23560-2</id>
    </interactant>
    <interactant intactId="EBI-10173507">
        <id>Q6UY14-3</id>
        <label>ADAMTSL4</label>
    </interactant>
    <organismsDiffer>false</organismsDiffer>
    <experiments>3</experiments>
</comment>
<comment type="interaction">
    <interactant intactId="EBI-12275524">
        <id>P23560-2</id>
    </interactant>
    <interactant intactId="EBI-1646426">
        <id>Q15109</id>
        <label>AGER</label>
    </interactant>
    <organismsDiffer>false</organismsDiffer>
    <experiments>3</experiments>
</comment>
<comment type="interaction">
    <interactant intactId="EBI-12275524">
        <id>P23560-2</id>
    </interactant>
    <interactant intactId="EBI-3916527">
        <id>Q9UIJ7</id>
        <label>AK3</label>
    </interactant>
    <organismsDiffer>false</organismsDiffer>
    <experiments>3</experiments>
</comment>
<comment type="interaction">
    <interactant intactId="EBI-12275524">
        <id>P23560-2</id>
    </interactant>
    <interactant intactId="EBI-9641396">
        <id>Q8IWZ3-2</id>
        <label>ANKHD1</label>
    </interactant>
    <organismsDiffer>false</organismsDiffer>
    <experiments>3</experiments>
</comment>
<comment type="interaction">
    <interactant intactId="EBI-12275524">
        <id>P23560-2</id>
    </interactant>
    <interactant intactId="EBI-25833200">
        <id>Q8IWZ3-3</id>
        <label>ANKHD1</label>
    </interactant>
    <organismsDiffer>false</organismsDiffer>
    <experiments>3</experiments>
</comment>
<comment type="interaction">
    <interactant intactId="EBI-12275524">
        <id>P23560-2</id>
    </interactant>
    <interactant intactId="EBI-2556852">
        <id>P09525</id>
        <label>ANXA4</label>
    </interactant>
    <organismsDiffer>false</organismsDiffer>
    <experiments>3</experiments>
</comment>
<comment type="interaction">
    <interactant intactId="EBI-12275524">
        <id>P23560-2</id>
    </interactant>
    <interactant intactId="EBI-2606497">
        <id>Q8WW43</id>
        <label>APH1B</label>
    </interactant>
    <organismsDiffer>false</organismsDiffer>
    <experiments>3</experiments>
</comment>
<comment type="interaction">
    <interactant intactId="EBI-12275524">
        <id>P23560-2</id>
    </interactant>
    <interactant intactId="EBI-77613">
        <id>P05067</id>
        <label>APP</label>
    </interactant>
    <organismsDiffer>false</organismsDiffer>
    <experiments>3</experiments>
</comment>
<comment type="interaction">
    <interactant intactId="EBI-12275524">
        <id>P23560-2</id>
    </interactant>
    <interactant intactId="EBI-935503">
        <id>Q9H0C5</id>
        <label>BTBD1</label>
    </interactant>
    <organismsDiffer>false</organismsDiffer>
    <experiments>3</experiments>
</comment>
<comment type="interaction">
    <interactant intactId="EBI-12275524">
        <id>P23560-2</id>
    </interactant>
    <interactant intactId="EBI-1383687">
        <id>Q9UQM7</id>
        <label>CAMK2A</label>
    </interactant>
    <organismsDiffer>false</organismsDiffer>
    <experiments>3</experiments>
</comment>
<comment type="interaction">
    <interactant intactId="EBI-12275524">
        <id>P23560-2</id>
    </interactant>
    <interactant intactId="EBI-2874058">
        <id>Q9BV29</id>
        <label>CCDC32</label>
    </interactant>
    <organismsDiffer>false</organismsDiffer>
    <experiments>3</experiments>
</comment>
<comment type="interaction">
    <interactant intactId="EBI-12275524">
        <id>P23560-2</id>
    </interactant>
    <interactant intactId="EBI-1041567">
        <id>Q00535</id>
        <label>CDK5</label>
    </interactant>
    <organismsDiffer>false</organismsDiffer>
    <experiments>3</experiments>
</comment>
<comment type="interaction">
    <interactant intactId="EBI-12275524">
        <id>P23560-2</id>
    </interactant>
    <interactant intactId="EBI-10699285">
        <id>Q6QEF8-4</id>
        <label>CORO6</label>
    </interactant>
    <organismsDiffer>false</organismsDiffer>
    <experiments>3</experiments>
</comment>
<comment type="interaction">
    <interactant intactId="EBI-12275524">
        <id>P23560-2</id>
    </interactant>
    <interactant intactId="EBI-473101">
        <id>Q14194</id>
        <label>CRMP1</label>
    </interactant>
    <organismsDiffer>false</organismsDiffer>
    <experiments>3</experiments>
</comment>
<comment type="interaction">
    <interactant intactId="EBI-12275524">
        <id>P23560-2</id>
    </interactant>
    <interactant intactId="EBI-491549">
        <id>P35222</id>
        <label>CTNNB1</label>
    </interactant>
    <organismsDiffer>false</organismsDiffer>
    <experiments>3</experiments>
</comment>
<comment type="interaction">
    <interactant intactId="EBI-12275524">
        <id>P23560-2</id>
    </interactant>
    <interactant intactId="EBI-997830">
        <id>Q15438</id>
        <label>CYTH1</label>
    </interactant>
    <organismsDiffer>false</organismsDiffer>
    <experiments>3</experiments>
</comment>
<comment type="interaction">
    <interactant intactId="EBI-12275524">
        <id>P23560-2</id>
    </interactant>
    <interactant intactId="EBI-19157435">
        <id>Q9BPW9-4</id>
        <label>DHRS9</label>
    </interactant>
    <organismsDiffer>false</organismsDiffer>
    <experiments>3</experiments>
</comment>
<comment type="interaction">
    <interactant intactId="EBI-12275524">
        <id>P23560-2</id>
    </interactant>
    <interactant intactId="EBI-20894690">
        <id>P49184</id>
        <label>DNASE1L1</label>
    </interactant>
    <organismsDiffer>false</organismsDiffer>
    <experiments>3</experiments>
</comment>
<comment type="interaction">
    <interactant intactId="EBI-12275524">
        <id>P23560-2</id>
    </interactant>
    <interactant intactId="EBI-6138796">
        <id>P07099</id>
        <label>EPHX1</label>
    </interactant>
    <organismsDiffer>false</organismsDiffer>
    <experiments>3</experiments>
</comment>
<comment type="interaction">
    <interactant intactId="EBI-12275524">
        <id>P23560-2</id>
    </interactant>
    <interactant intactId="EBI-949824">
        <id>O00471</id>
        <label>EXOC5</label>
    </interactant>
    <organismsDiffer>false</organismsDiffer>
    <experiments>3</experiments>
</comment>
<comment type="interaction">
    <interactant intactId="EBI-12275524">
        <id>P23560-2</id>
    </interactant>
    <interactant intactId="EBI-18304435">
        <id>Q5JX71</id>
        <label>FAM209A</label>
    </interactant>
    <organismsDiffer>false</organismsDiffer>
    <experiments>3</experiments>
</comment>
<comment type="interaction">
    <interactant intactId="EBI-12275524">
        <id>P23560-2</id>
    </interactant>
    <interactant intactId="EBI-744771">
        <id>O75344</id>
        <label>FKBP6</label>
    </interactant>
    <organismsDiffer>false</organismsDiffer>
    <experiments>3</experiments>
</comment>
<comment type="interaction">
    <interactant intactId="EBI-12275524">
        <id>P23560-2</id>
    </interactant>
    <interactant intactId="EBI-9090702">
        <id>Q10981</id>
        <label>FUT2</label>
    </interactant>
    <organismsDiffer>false</organismsDiffer>
    <experiments>3</experiments>
</comment>
<comment type="interaction">
    <interactant intactId="EBI-12275524">
        <id>P23560-2</id>
    </interactant>
    <interactant intactId="EBI-515315">
        <id>P06241</id>
        <label>FYN</label>
    </interactant>
    <organismsDiffer>false</organismsDiffer>
    <experiments>3</experiments>
</comment>
<comment type="interaction">
    <interactant intactId="EBI-12275524">
        <id>P23560-2</id>
    </interactant>
    <interactant intactId="EBI-6624768">
        <id>P22466</id>
        <label>GAL</label>
    </interactant>
    <organismsDiffer>false</organismsDiffer>
    <experiments>3</experiments>
</comment>
<comment type="interaction">
    <interactant intactId="EBI-12275524">
        <id>P23560-2</id>
    </interactant>
    <interactant intactId="EBI-745707">
        <id>Q8NEA9</id>
        <label>GMCL2</label>
    </interactant>
    <organismsDiffer>false</organismsDiffer>
    <experiments>3</experiments>
</comment>
<comment type="interaction">
    <interactant intactId="EBI-12275524">
        <id>P23560-2</id>
    </interactant>
    <interactant intactId="EBI-13345167">
        <id>Q8TDT2</id>
        <label>GPR152</label>
    </interactant>
    <organismsDiffer>false</organismsDiffer>
    <experiments>3</experiments>
</comment>
<comment type="interaction">
    <interactant intactId="EBI-12275524">
        <id>P23560-2</id>
    </interactant>
    <interactant intactId="EBI-2801937">
        <id>Q9UBK5</id>
        <label>HCST</label>
    </interactant>
    <organismsDiffer>false</organismsDiffer>
    <experiments>3</experiments>
</comment>
<comment type="interaction">
    <interactant intactId="EBI-12275524">
        <id>P23560-2</id>
    </interactant>
    <interactant intactId="EBI-8643838">
        <id>O43365</id>
        <label>HOXA3</label>
    </interactant>
    <organismsDiffer>false</organismsDiffer>
    <experiments>3</experiments>
</comment>
<comment type="interaction">
    <interactant intactId="EBI-12275524">
        <id>P23560-2</id>
    </interactant>
    <interactant intactId="EBI-25830912">
        <id>Q96LI6-3</id>
        <label>HSFY2</label>
    </interactant>
    <organismsDiffer>false</organismsDiffer>
    <experiments>3</experiments>
</comment>
<comment type="interaction">
    <interactant intactId="EBI-12275524">
        <id>P23560-2</id>
    </interactant>
    <interactant intactId="EBI-20795332">
        <id>Q92993-2</id>
        <label>KAT5</label>
    </interactant>
    <organismsDiffer>false</organismsDiffer>
    <experiments>3</experiments>
</comment>
<comment type="interaction">
    <interactant intactId="EBI-12275524">
        <id>P23560-2</id>
    </interactant>
    <interactant intactId="EBI-3927059">
        <id>P18428</id>
        <label>LBP</label>
    </interactant>
    <organismsDiffer>false</organismsDiffer>
    <experiments>3</experiments>
</comment>
<comment type="interaction">
    <interactant intactId="EBI-12275524">
        <id>P23560-2</id>
    </interactant>
    <interactant intactId="EBI-9537218">
        <id>Q96G30</id>
        <label>MRAP2</label>
    </interactant>
    <organismsDiffer>false</organismsDiffer>
    <experiments>3</experiments>
</comment>
<comment type="interaction">
    <interactant intactId="EBI-12275524">
        <id>P23560-2</id>
    </interactant>
    <interactant intactId="EBI-5325200">
        <id>Q13405</id>
        <label>MRPL49</label>
    </interactant>
    <organismsDiffer>false</organismsDiffer>
    <experiments>3</experiments>
</comment>
<comment type="interaction">
    <interactant intactId="EBI-12275524">
        <id>P23560-2</id>
    </interactant>
    <interactant intactId="EBI-18063495">
        <id>Q8TBJ4</id>
        <label>PLPPR1</label>
    </interactant>
    <organismsDiffer>false</organismsDiffer>
    <experiments>3</experiments>
</comment>
<comment type="interaction">
    <interactant intactId="EBI-12275524">
        <id>P23560-2</id>
    </interactant>
    <interactant intactId="EBI-476586">
        <id>P17612</id>
        <label>PRKACA</label>
    </interactant>
    <organismsDiffer>false</organismsDiffer>
    <experiments>3</experiments>
</comment>
<comment type="interaction">
    <interactant intactId="EBI-12275524">
        <id>P23560-2</id>
    </interactant>
    <interactant intactId="EBI-749195">
        <id>P60891</id>
        <label>PRPS1</label>
    </interactant>
    <organismsDiffer>false</organismsDiffer>
    <experiments>3</experiments>
</comment>
<comment type="interaction">
    <interactant intactId="EBI-12275524">
        <id>P23560-2</id>
    </interactant>
    <interactant intactId="EBI-743880">
        <id>Q8WUY3</id>
        <label>PRUNE2</label>
    </interactant>
    <organismsDiffer>false</organismsDiffer>
    <experiments>3</experiments>
</comment>
<comment type="interaction">
    <interactant intactId="EBI-12275524">
        <id>P23560-2</id>
    </interactant>
    <interactant intactId="EBI-8636004">
        <id>Q96GQ5</id>
        <label>RUSF1</label>
    </interactant>
    <organismsDiffer>false</organismsDiffer>
    <experiments>3</experiments>
</comment>
<comment type="interaction">
    <interactant intactId="EBI-12275524">
        <id>P23560-2</id>
    </interactant>
    <interactant intactId="EBI-7225508">
        <id>Q96GZ6</id>
        <label>SLC41A3</label>
    </interactant>
    <organismsDiffer>false</organismsDiffer>
    <experiments>3</experiments>
</comment>
<comment type="interaction">
    <interactant intactId="EBI-12275524">
        <id>P23560-2</id>
    </interactant>
    <interactant intactId="EBI-21504521">
        <id>Q8NCS7</id>
        <label>SLC44A5</label>
    </interactant>
    <organismsDiffer>false</organismsDiffer>
    <experiments>3</experiments>
</comment>
<comment type="interaction">
    <interactant intactId="EBI-12275524">
        <id>P23560-2</id>
    </interactant>
    <interactant intactId="EBI-12336127">
        <id>Q7Z614-3</id>
        <label>SNX20</label>
    </interactant>
    <organismsDiffer>false</organismsDiffer>
    <experiments>3</experiments>
</comment>
<comment type="interaction">
    <interactant intactId="EBI-12275524">
        <id>P23560-2</id>
    </interactant>
    <interactant intactId="EBI-1057058">
        <id>Q99523</id>
        <label>SORT1</label>
    </interactant>
    <organismsDiffer>false</organismsDiffer>
    <experiments>3</experiments>
</comment>
<comment type="interaction">
    <interactant intactId="EBI-12275524">
        <id>P23560-2</id>
    </interactant>
    <interactant intactId="EBI-3921684">
        <id>Q9H808</id>
        <label>TLE6</label>
    </interactant>
    <organismsDiffer>false</organismsDiffer>
    <experiments>3</experiments>
</comment>
<comment type="interaction">
    <interactant intactId="EBI-12275524">
        <id>P23560-2</id>
    </interactant>
    <interactant intactId="EBI-594644">
        <id>P10599</id>
        <label>TXN</label>
    </interactant>
    <organismsDiffer>false</organismsDiffer>
    <experiments>3</experiments>
</comment>
<comment type="interaction">
    <interactant intactId="EBI-12275524">
        <id>P23560-2</id>
    </interactant>
    <interactant intactId="EBI-25833079">
        <id>Q15386-3</id>
        <label>UBE3C</label>
    </interactant>
    <organismsDiffer>false</organismsDiffer>
    <experiments>3</experiments>
</comment>
<comment type="interaction">
    <interactant intactId="EBI-12275524">
        <id>P23560-2</id>
    </interactant>
    <interactant intactId="EBI-25833271">
        <id>Q9H6R7-2</id>
        <label>WDCP</label>
    </interactant>
    <organismsDiffer>false</organismsDiffer>
    <experiments>3</experiments>
</comment>
<comment type="interaction">
    <interactant intactId="EBI-12275524">
        <id>P23560-2</id>
    </interactant>
    <interactant intactId="EBI-25833374">
        <id>O60293-2</id>
        <label>ZFC3H1</label>
    </interactant>
    <organismsDiffer>false</organismsDiffer>
    <experiments>3</experiments>
</comment>
<comment type="interaction">
    <interactant intactId="EBI-12275524">
        <id>P23560-2</id>
    </interactant>
    <interactant intactId="EBI-25833318">
        <id>Q6P514</id>
        <label>ZNF468</label>
    </interactant>
    <organismsDiffer>false</organismsDiffer>
    <experiments>3</experiments>
</comment>
<comment type="interaction">
    <interactant intactId="EBI-12275524">
        <id>P23560-2</id>
    </interactant>
    <interactant intactId="EBI-13387614">
        <id>A0A087WZY1</id>
    </interactant>
    <organismsDiffer>false</organismsDiffer>
    <experiments>3</experiments>
</comment>
<comment type="subcellular location">
    <subcellularLocation>
        <location evidence="5 13 19">Secreted</location>
    </subcellularLocation>
</comment>
<comment type="subcellular location">
    <molecule>Neurotrophic factor BDNF precursor form</molecule>
    <subcellularLocation>
        <location evidence="5 13">Secreted</location>
    </subcellularLocation>
    <text evidence="5 13">A proportion of BDNF is secreted as immature precursor (proBDNF).</text>
</comment>
<comment type="alternative products">
    <event type="alternative promoter"/>
    <event type="alternative splicing"/>
    <isoform>
        <id>P23560-1</id>
        <name>1</name>
        <sequence type="displayed"/>
    </isoform>
    <isoform>
        <id>P23560-2</id>
        <name>2</name>
        <sequence type="described" ref="VSP_037948"/>
    </isoform>
    <isoform>
        <id>P23560-3</id>
        <name>3</name>
        <sequence type="described" ref="VSP_038099"/>
    </isoform>
    <isoform>
        <id>P23560-4</id>
        <name>4</name>
        <sequence type="described" ref="VSP_038100"/>
    </isoform>
    <isoform>
        <id>P23560-5</id>
        <name>5</name>
        <sequence type="described" ref="VSP_038101"/>
    </isoform>
    <text>2 types of transcripts are produced: non-coding transcripts (antisense, opposite strand (OS), 8 exons) and coding transcripts (11 exons). Brain BDNF and anti-BDNF transcripts form dsRNA duplexes.</text>
</comment>
<comment type="tissue specificity">
    <text evidence="5 12 13 14">Detected in blood plasma and in saliva (at protein level) (PubMed:11152678, PubMed:19467646). Brain. Highly expressed in hippocampus, amygdala, cerebral cortex and cerebellum. Also expressed in heart, lung, skeletal muscle, testis, prostate and placenta.</text>
</comment>
<comment type="PTM">
    <molecule>Neurotrophic factor BDNF precursor form</molecule>
    <text evidence="5 13">N-glycosylated and glycosulfated, contrary to mature BDNF.</text>
</comment>
<comment type="PTM">
    <text evidence="5 13">Mature BDNF is produced by proteolytic removal of the propeptide, catalyzed by a FURIN family member. In addition, the precursor form is proteolytically cleaved within the propeptide, but this is not an obligatory intermediate for the production of mature BDNF (PubMed:11152678). Can be converted into mature BDNF by plasmin (PLG) (PubMed:19467646).</text>
</comment>
<comment type="similarity">
    <text evidence="25">Belongs to the NGF-beta family.</text>
</comment>
<comment type="online information" name="Wikipedia">
    <link uri="https://en.wikipedia.org/wiki/Brain-derived_neurotrophic_factor"/>
    <text>BDNF entry</text>
</comment>